<gene>
    <name evidence="1" type="primary">rnhA</name>
    <name type="ordered locus">Shewmr4_2158</name>
</gene>
<proteinExistence type="inferred from homology"/>
<accession>Q0HI86</accession>
<dbReference type="EC" id="3.1.26.4" evidence="1"/>
<dbReference type="EMBL" id="CP000446">
    <property type="protein sequence ID" value="ABI39231.1"/>
    <property type="molecule type" value="Genomic_DNA"/>
</dbReference>
<dbReference type="RefSeq" id="WP_011622921.1">
    <property type="nucleotide sequence ID" value="NC_008321.1"/>
</dbReference>
<dbReference type="SMR" id="Q0HI86"/>
<dbReference type="KEGG" id="she:Shewmr4_2158"/>
<dbReference type="HOGENOM" id="CLU_030894_6_0_6"/>
<dbReference type="GO" id="GO:0005737">
    <property type="term" value="C:cytoplasm"/>
    <property type="evidence" value="ECO:0007669"/>
    <property type="project" value="UniProtKB-SubCell"/>
</dbReference>
<dbReference type="GO" id="GO:0000287">
    <property type="term" value="F:magnesium ion binding"/>
    <property type="evidence" value="ECO:0007669"/>
    <property type="project" value="UniProtKB-UniRule"/>
</dbReference>
<dbReference type="GO" id="GO:0003676">
    <property type="term" value="F:nucleic acid binding"/>
    <property type="evidence" value="ECO:0007669"/>
    <property type="project" value="InterPro"/>
</dbReference>
<dbReference type="GO" id="GO:0004523">
    <property type="term" value="F:RNA-DNA hybrid ribonuclease activity"/>
    <property type="evidence" value="ECO:0007669"/>
    <property type="project" value="UniProtKB-UniRule"/>
</dbReference>
<dbReference type="GO" id="GO:0043137">
    <property type="term" value="P:DNA replication, removal of RNA primer"/>
    <property type="evidence" value="ECO:0007669"/>
    <property type="project" value="TreeGrafter"/>
</dbReference>
<dbReference type="CDD" id="cd09278">
    <property type="entry name" value="RNase_HI_prokaryote_like"/>
    <property type="match status" value="1"/>
</dbReference>
<dbReference type="FunFam" id="3.30.420.10:FF:000008">
    <property type="entry name" value="Ribonuclease H"/>
    <property type="match status" value="1"/>
</dbReference>
<dbReference type="Gene3D" id="3.30.420.10">
    <property type="entry name" value="Ribonuclease H-like superfamily/Ribonuclease H"/>
    <property type="match status" value="1"/>
</dbReference>
<dbReference type="HAMAP" id="MF_00042">
    <property type="entry name" value="RNase_H"/>
    <property type="match status" value="1"/>
</dbReference>
<dbReference type="InterPro" id="IPR050092">
    <property type="entry name" value="RNase_H"/>
</dbReference>
<dbReference type="InterPro" id="IPR012337">
    <property type="entry name" value="RNaseH-like_sf"/>
</dbReference>
<dbReference type="InterPro" id="IPR002156">
    <property type="entry name" value="RNaseH_domain"/>
</dbReference>
<dbReference type="InterPro" id="IPR036397">
    <property type="entry name" value="RNaseH_sf"/>
</dbReference>
<dbReference type="InterPro" id="IPR022892">
    <property type="entry name" value="RNaseHI"/>
</dbReference>
<dbReference type="NCBIfam" id="NF001236">
    <property type="entry name" value="PRK00203.1"/>
    <property type="match status" value="1"/>
</dbReference>
<dbReference type="PANTHER" id="PTHR10642">
    <property type="entry name" value="RIBONUCLEASE H1"/>
    <property type="match status" value="1"/>
</dbReference>
<dbReference type="PANTHER" id="PTHR10642:SF26">
    <property type="entry name" value="RIBONUCLEASE H1"/>
    <property type="match status" value="1"/>
</dbReference>
<dbReference type="Pfam" id="PF00075">
    <property type="entry name" value="RNase_H"/>
    <property type="match status" value="1"/>
</dbReference>
<dbReference type="SUPFAM" id="SSF53098">
    <property type="entry name" value="Ribonuclease H-like"/>
    <property type="match status" value="1"/>
</dbReference>
<dbReference type="PROSITE" id="PS50879">
    <property type="entry name" value="RNASE_H_1"/>
    <property type="match status" value="1"/>
</dbReference>
<name>RNH_SHESM</name>
<organism>
    <name type="scientific">Shewanella sp. (strain MR-4)</name>
    <dbReference type="NCBI Taxonomy" id="60480"/>
    <lineage>
        <taxon>Bacteria</taxon>
        <taxon>Pseudomonadati</taxon>
        <taxon>Pseudomonadota</taxon>
        <taxon>Gammaproteobacteria</taxon>
        <taxon>Alteromonadales</taxon>
        <taxon>Shewanellaceae</taxon>
        <taxon>Shewanella</taxon>
    </lineage>
</organism>
<feature type="chain" id="PRO_1000074674" description="Ribonuclease H">
    <location>
        <begin position="1"/>
        <end position="158"/>
    </location>
</feature>
<feature type="domain" description="RNase H type-1" evidence="2">
    <location>
        <begin position="3"/>
        <end position="144"/>
    </location>
</feature>
<feature type="binding site" evidence="1">
    <location>
        <position position="12"/>
    </location>
    <ligand>
        <name>Mg(2+)</name>
        <dbReference type="ChEBI" id="CHEBI:18420"/>
        <label>1</label>
    </ligand>
</feature>
<feature type="binding site" evidence="1">
    <location>
        <position position="12"/>
    </location>
    <ligand>
        <name>Mg(2+)</name>
        <dbReference type="ChEBI" id="CHEBI:18420"/>
        <label>2</label>
    </ligand>
</feature>
<feature type="binding site" evidence="1">
    <location>
        <position position="50"/>
    </location>
    <ligand>
        <name>Mg(2+)</name>
        <dbReference type="ChEBI" id="CHEBI:18420"/>
        <label>1</label>
    </ligand>
</feature>
<feature type="binding site" evidence="1">
    <location>
        <position position="72"/>
    </location>
    <ligand>
        <name>Mg(2+)</name>
        <dbReference type="ChEBI" id="CHEBI:18420"/>
        <label>1</label>
    </ligand>
</feature>
<feature type="binding site" evidence="1">
    <location>
        <position position="136"/>
    </location>
    <ligand>
        <name>Mg(2+)</name>
        <dbReference type="ChEBI" id="CHEBI:18420"/>
        <label>2</label>
    </ligand>
</feature>
<comment type="function">
    <text evidence="1">Endonuclease that specifically degrades the RNA of RNA-DNA hybrids.</text>
</comment>
<comment type="catalytic activity">
    <reaction evidence="1">
        <text>Endonucleolytic cleavage to 5'-phosphomonoester.</text>
        <dbReference type="EC" id="3.1.26.4"/>
    </reaction>
</comment>
<comment type="cofactor">
    <cofactor evidence="1">
        <name>Mg(2+)</name>
        <dbReference type="ChEBI" id="CHEBI:18420"/>
    </cofactor>
    <text evidence="1">Binds 1 Mg(2+) ion per subunit. May bind a second metal ion at a regulatory site, or after substrate binding.</text>
</comment>
<comment type="subunit">
    <text evidence="1">Monomer.</text>
</comment>
<comment type="subcellular location">
    <subcellularLocation>
        <location evidence="1">Cytoplasm</location>
    </subcellularLocation>
</comment>
<comment type="similarity">
    <text evidence="1">Belongs to the RNase H family.</text>
</comment>
<keyword id="KW-0963">Cytoplasm</keyword>
<keyword id="KW-0255">Endonuclease</keyword>
<keyword id="KW-0378">Hydrolase</keyword>
<keyword id="KW-0460">Magnesium</keyword>
<keyword id="KW-0479">Metal-binding</keyword>
<keyword id="KW-0540">Nuclease</keyword>
<sequence>MTELKLIHIFTDGSCLGNPGPGGYGIVMNYKGHTKEMSDGFALTTNNRMELLAPIVALEALKEPCKVILTSDSQYMRQGITTWIHGWKKKGWMTSNRTPVKNVDLWKRLDKAAQLHHIDWRWVKGHAGHAENERCDQLARAAAEASPTQIDEGYQAES</sequence>
<protein>
    <recommendedName>
        <fullName evidence="1">Ribonuclease H</fullName>
        <shortName evidence="1">RNase H</shortName>
        <ecNumber evidence="1">3.1.26.4</ecNumber>
    </recommendedName>
</protein>
<reference key="1">
    <citation type="submission" date="2006-08" db="EMBL/GenBank/DDBJ databases">
        <title>Complete sequence of Shewanella sp. MR-4.</title>
        <authorList>
            <consortium name="US DOE Joint Genome Institute"/>
            <person name="Copeland A."/>
            <person name="Lucas S."/>
            <person name="Lapidus A."/>
            <person name="Barry K."/>
            <person name="Detter J.C."/>
            <person name="Glavina del Rio T."/>
            <person name="Hammon N."/>
            <person name="Israni S."/>
            <person name="Dalin E."/>
            <person name="Tice H."/>
            <person name="Pitluck S."/>
            <person name="Kiss H."/>
            <person name="Brettin T."/>
            <person name="Bruce D."/>
            <person name="Han C."/>
            <person name="Tapia R."/>
            <person name="Gilna P."/>
            <person name="Schmutz J."/>
            <person name="Larimer F."/>
            <person name="Land M."/>
            <person name="Hauser L."/>
            <person name="Kyrpides N."/>
            <person name="Mikhailova N."/>
            <person name="Nealson K."/>
            <person name="Konstantinidis K."/>
            <person name="Klappenbach J."/>
            <person name="Tiedje J."/>
            <person name="Richardson P."/>
        </authorList>
    </citation>
    <scope>NUCLEOTIDE SEQUENCE [LARGE SCALE GENOMIC DNA]</scope>
    <source>
        <strain>MR-4</strain>
    </source>
</reference>
<evidence type="ECO:0000255" key="1">
    <source>
        <dbReference type="HAMAP-Rule" id="MF_00042"/>
    </source>
</evidence>
<evidence type="ECO:0000255" key="2">
    <source>
        <dbReference type="PROSITE-ProRule" id="PRU00408"/>
    </source>
</evidence>